<reference key="1">
    <citation type="submission" date="2008-06" db="EMBL/GenBank/DDBJ databases">
        <title>Complete sequence of Stenotrophomonas maltophilia R551-3.</title>
        <authorList>
            <consortium name="US DOE Joint Genome Institute"/>
            <person name="Lucas S."/>
            <person name="Copeland A."/>
            <person name="Lapidus A."/>
            <person name="Glavina del Rio T."/>
            <person name="Dalin E."/>
            <person name="Tice H."/>
            <person name="Pitluck S."/>
            <person name="Chain P."/>
            <person name="Malfatti S."/>
            <person name="Shin M."/>
            <person name="Vergez L."/>
            <person name="Lang D."/>
            <person name="Schmutz J."/>
            <person name="Larimer F."/>
            <person name="Land M."/>
            <person name="Hauser L."/>
            <person name="Kyrpides N."/>
            <person name="Mikhailova N."/>
            <person name="Taghavi S."/>
            <person name="Monchy S."/>
            <person name="Newman L."/>
            <person name="Vangronsveld J."/>
            <person name="van der Lelie D."/>
            <person name="Richardson P."/>
        </authorList>
    </citation>
    <scope>NUCLEOTIDE SEQUENCE [LARGE SCALE GENOMIC DNA]</scope>
    <source>
        <strain>R551-3</strain>
    </source>
</reference>
<organism>
    <name type="scientific">Stenotrophomonas maltophilia (strain R551-3)</name>
    <dbReference type="NCBI Taxonomy" id="391008"/>
    <lineage>
        <taxon>Bacteria</taxon>
        <taxon>Pseudomonadati</taxon>
        <taxon>Pseudomonadota</taxon>
        <taxon>Gammaproteobacteria</taxon>
        <taxon>Lysobacterales</taxon>
        <taxon>Lysobacteraceae</taxon>
        <taxon>Stenotrophomonas</taxon>
        <taxon>Stenotrophomonas maltophilia group</taxon>
    </lineage>
</organism>
<sequence length="350" mass="38006">MKLVDEAEIEVFAGNGGNGCIGFRREKFIPLGGPDGGDGGAGGSVYIRADENLNTLVDFRHDRIFKAQRGENGMGRQAYGKGGEDLTITVPVGTVIINVATDEIIGDLTQHGDRLLVAQGGRGGLGNMHFKSSTNRSPRQALPGEPGEERTLKLELKLLADVGLLGFPNAGKSTLIRAVSAATPKVADYPFTTLYPNLGVVKVENYRSFVIADIPGLIEGAADGAGLGAQFLRHLQRTRLLLHLVDISPMEGGVEGISPVEQVRAIERELEKHDPELLQKPRWLVLNKADLMFEDEAKAAAEQIVAELGWKEPWFLVSALGREGTFPIMSRIMAFFDRQKEDELEARNAL</sequence>
<gene>
    <name evidence="1" type="primary">obg</name>
    <name type="ordered locus">Smal_1121</name>
</gene>
<evidence type="ECO:0000255" key="1">
    <source>
        <dbReference type="HAMAP-Rule" id="MF_01454"/>
    </source>
</evidence>
<evidence type="ECO:0000255" key="2">
    <source>
        <dbReference type="PROSITE-ProRule" id="PRU01231"/>
    </source>
</evidence>
<evidence type="ECO:0000256" key="3">
    <source>
        <dbReference type="SAM" id="MobiDB-lite"/>
    </source>
</evidence>
<proteinExistence type="inferred from homology"/>
<feature type="chain" id="PRO_0000386288" description="GTPase Obg">
    <location>
        <begin position="1"/>
        <end position="350"/>
    </location>
</feature>
<feature type="domain" description="Obg" evidence="2">
    <location>
        <begin position="1"/>
        <end position="159"/>
    </location>
</feature>
<feature type="domain" description="OBG-type G" evidence="1">
    <location>
        <begin position="160"/>
        <end position="337"/>
    </location>
</feature>
<feature type="region of interest" description="Disordered" evidence="3">
    <location>
        <begin position="127"/>
        <end position="147"/>
    </location>
</feature>
<feature type="binding site" evidence="1">
    <location>
        <begin position="166"/>
        <end position="173"/>
    </location>
    <ligand>
        <name>GTP</name>
        <dbReference type="ChEBI" id="CHEBI:37565"/>
    </ligand>
</feature>
<feature type="binding site" evidence="1">
    <location>
        <position position="173"/>
    </location>
    <ligand>
        <name>Mg(2+)</name>
        <dbReference type="ChEBI" id="CHEBI:18420"/>
    </ligand>
</feature>
<feature type="binding site" evidence="1">
    <location>
        <begin position="191"/>
        <end position="195"/>
    </location>
    <ligand>
        <name>GTP</name>
        <dbReference type="ChEBI" id="CHEBI:37565"/>
    </ligand>
</feature>
<feature type="binding site" evidence="1">
    <location>
        <position position="193"/>
    </location>
    <ligand>
        <name>Mg(2+)</name>
        <dbReference type="ChEBI" id="CHEBI:18420"/>
    </ligand>
</feature>
<feature type="binding site" evidence="1">
    <location>
        <begin position="213"/>
        <end position="216"/>
    </location>
    <ligand>
        <name>GTP</name>
        <dbReference type="ChEBI" id="CHEBI:37565"/>
    </ligand>
</feature>
<feature type="binding site" evidence="1">
    <location>
        <begin position="287"/>
        <end position="290"/>
    </location>
    <ligand>
        <name>GTP</name>
        <dbReference type="ChEBI" id="CHEBI:37565"/>
    </ligand>
</feature>
<feature type="binding site" evidence="1">
    <location>
        <begin position="318"/>
        <end position="320"/>
    </location>
    <ligand>
        <name>GTP</name>
        <dbReference type="ChEBI" id="CHEBI:37565"/>
    </ligand>
</feature>
<dbReference type="EC" id="3.6.5.-" evidence="1"/>
<dbReference type="EMBL" id="CP001111">
    <property type="protein sequence ID" value="ACF50826.1"/>
    <property type="molecule type" value="Genomic_DNA"/>
</dbReference>
<dbReference type="SMR" id="B4SP14"/>
<dbReference type="STRING" id="391008.Smal_1121"/>
<dbReference type="KEGG" id="smt:Smal_1121"/>
<dbReference type="eggNOG" id="COG0536">
    <property type="taxonomic scope" value="Bacteria"/>
</dbReference>
<dbReference type="HOGENOM" id="CLU_011747_2_0_6"/>
<dbReference type="OrthoDB" id="9807318at2"/>
<dbReference type="Proteomes" id="UP000001867">
    <property type="component" value="Chromosome"/>
</dbReference>
<dbReference type="GO" id="GO:0005737">
    <property type="term" value="C:cytoplasm"/>
    <property type="evidence" value="ECO:0007669"/>
    <property type="project" value="UniProtKB-SubCell"/>
</dbReference>
<dbReference type="GO" id="GO:0005525">
    <property type="term" value="F:GTP binding"/>
    <property type="evidence" value="ECO:0007669"/>
    <property type="project" value="UniProtKB-UniRule"/>
</dbReference>
<dbReference type="GO" id="GO:0003924">
    <property type="term" value="F:GTPase activity"/>
    <property type="evidence" value="ECO:0007669"/>
    <property type="project" value="UniProtKB-UniRule"/>
</dbReference>
<dbReference type="GO" id="GO:0000287">
    <property type="term" value="F:magnesium ion binding"/>
    <property type="evidence" value="ECO:0007669"/>
    <property type="project" value="InterPro"/>
</dbReference>
<dbReference type="GO" id="GO:0042254">
    <property type="term" value="P:ribosome biogenesis"/>
    <property type="evidence" value="ECO:0007669"/>
    <property type="project" value="UniProtKB-UniRule"/>
</dbReference>
<dbReference type="CDD" id="cd01898">
    <property type="entry name" value="Obg"/>
    <property type="match status" value="1"/>
</dbReference>
<dbReference type="FunFam" id="2.70.210.12:FF:000001">
    <property type="entry name" value="GTPase Obg"/>
    <property type="match status" value="1"/>
</dbReference>
<dbReference type="Gene3D" id="2.70.210.12">
    <property type="entry name" value="GTP1/OBG domain"/>
    <property type="match status" value="1"/>
</dbReference>
<dbReference type="Gene3D" id="3.40.50.300">
    <property type="entry name" value="P-loop containing nucleotide triphosphate hydrolases"/>
    <property type="match status" value="1"/>
</dbReference>
<dbReference type="HAMAP" id="MF_01454">
    <property type="entry name" value="GTPase_Obg"/>
    <property type="match status" value="1"/>
</dbReference>
<dbReference type="InterPro" id="IPR031167">
    <property type="entry name" value="G_OBG"/>
</dbReference>
<dbReference type="InterPro" id="IPR006073">
    <property type="entry name" value="GTP-bd"/>
</dbReference>
<dbReference type="InterPro" id="IPR014100">
    <property type="entry name" value="GTP-bd_Obg/CgtA"/>
</dbReference>
<dbReference type="InterPro" id="IPR006074">
    <property type="entry name" value="GTP1-OBG_CS"/>
</dbReference>
<dbReference type="InterPro" id="IPR006169">
    <property type="entry name" value="GTP1_OBG_dom"/>
</dbReference>
<dbReference type="InterPro" id="IPR036726">
    <property type="entry name" value="GTP1_OBG_dom_sf"/>
</dbReference>
<dbReference type="InterPro" id="IPR045086">
    <property type="entry name" value="OBG_GTPase"/>
</dbReference>
<dbReference type="InterPro" id="IPR027417">
    <property type="entry name" value="P-loop_NTPase"/>
</dbReference>
<dbReference type="NCBIfam" id="TIGR02729">
    <property type="entry name" value="Obg_CgtA"/>
    <property type="match status" value="1"/>
</dbReference>
<dbReference type="NCBIfam" id="NF008955">
    <property type="entry name" value="PRK12297.1"/>
    <property type="match status" value="1"/>
</dbReference>
<dbReference type="NCBIfam" id="NF008956">
    <property type="entry name" value="PRK12299.1"/>
    <property type="match status" value="1"/>
</dbReference>
<dbReference type="PANTHER" id="PTHR11702">
    <property type="entry name" value="DEVELOPMENTALLY REGULATED GTP-BINDING PROTEIN-RELATED"/>
    <property type="match status" value="1"/>
</dbReference>
<dbReference type="PANTHER" id="PTHR11702:SF31">
    <property type="entry name" value="MITOCHONDRIAL RIBOSOME-ASSOCIATED GTPASE 2"/>
    <property type="match status" value="1"/>
</dbReference>
<dbReference type="Pfam" id="PF01018">
    <property type="entry name" value="GTP1_OBG"/>
    <property type="match status" value="1"/>
</dbReference>
<dbReference type="Pfam" id="PF01926">
    <property type="entry name" value="MMR_HSR1"/>
    <property type="match status" value="1"/>
</dbReference>
<dbReference type="PIRSF" id="PIRSF002401">
    <property type="entry name" value="GTP_bd_Obg/CgtA"/>
    <property type="match status" value="1"/>
</dbReference>
<dbReference type="PRINTS" id="PR00326">
    <property type="entry name" value="GTP1OBG"/>
</dbReference>
<dbReference type="SUPFAM" id="SSF82051">
    <property type="entry name" value="Obg GTP-binding protein N-terminal domain"/>
    <property type="match status" value="1"/>
</dbReference>
<dbReference type="SUPFAM" id="SSF52540">
    <property type="entry name" value="P-loop containing nucleoside triphosphate hydrolases"/>
    <property type="match status" value="1"/>
</dbReference>
<dbReference type="PROSITE" id="PS51710">
    <property type="entry name" value="G_OBG"/>
    <property type="match status" value="1"/>
</dbReference>
<dbReference type="PROSITE" id="PS00905">
    <property type="entry name" value="GTP1_OBG"/>
    <property type="match status" value="1"/>
</dbReference>
<dbReference type="PROSITE" id="PS51883">
    <property type="entry name" value="OBG"/>
    <property type="match status" value="1"/>
</dbReference>
<accession>B4SP14</accession>
<keyword id="KW-0963">Cytoplasm</keyword>
<keyword id="KW-0342">GTP-binding</keyword>
<keyword id="KW-0378">Hydrolase</keyword>
<keyword id="KW-0460">Magnesium</keyword>
<keyword id="KW-0479">Metal-binding</keyword>
<keyword id="KW-0547">Nucleotide-binding</keyword>
<comment type="function">
    <text evidence="1">An essential GTPase which binds GTP, GDP and possibly (p)ppGpp with moderate affinity, with high nucleotide exchange rates and a fairly low GTP hydrolysis rate. Plays a role in control of the cell cycle, stress response, ribosome biogenesis and in those bacteria that undergo differentiation, in morphogenesis control.</text>
</comment>
<comment type="cofactor">
    <cofactor evidence="1">
        <name>Mg(2+)</name>
        <dbReference type="ChEBI" id="CHEBI:18420"/>
    </cofactor>
</comment>
<comment type="subunit">
    <text evidence="1">Monomer.</text>
</comment>
<comment type="subcellular location">
    <subcellularLocation>
        <location evidence="1">Cytoplasm</location>
    </subcellularLocation>
</comment>
<comment type="similarity">
    <text evidence="1">Belongs to the TRAFAC class OBG-HflX-like GTPase superfamily. OBG GTPase family.</text>
</comment>
<protein>
    <recommendedName>
        <fullName evidence="1">GTPase Obg</fullName>
        <ecNumber evidence="1">3.6.5.-</ecNumber>
    </recommendedName>
    <alternativeName>
        <fullName evidence="1">GTP-binding protein Obg</fullName>
    </alternativeName>
</protein>
<name>OBG_STRM5</name>